<dbReference type="EC" id="7.1.1.9"/>
<dbReference type="EMBL" id="AF147588">
    <property type="protein sequence ID" value="AAG42581.1"/>
    <property type="molecule type" value="Genomic_DNA"/>
</dbReference>
<dbReference type="SMR" id="Q7IZ16"/>
<dbReference type="GO" id="GO:0005743">
    <property type="term" value="C:mitochondrial inner membrane"/>
    <property type="evidence" value="ECO:0007669"/>
    <property type="project" value="UniProtKB-SubCell"/>
</dbReference>
<dbReference type="GO" id="GO:0045277">
    <property type="term" value="C:respiratory chain complex IV"/>
    <property type="evidence" value="ECO:0000250"/>
    <property type="project" value="UniProtKB"/>
</dbReference>
<dbReference type="GO" id="GO:0005507">
    <property type="term" value="F:copper ion binding"/>
    <property type="evidence" value="ECO:0007669"/>
    <property type="project" value="InterPro"/>
</dbReference>
<dbReference type="GO" id="GO:0004129">
    <property type="term" value="F:cytochrome-c oxidase activity"/>
    <property type="evidence" value="ECO:0007669"/>
    <property type="project" value="UniProtKB-EC"/>
</dbReference>
<dbReference type="GO" id="GO:0042773">
    <property type="term" value="P:ATP synthesis coupled electron transport"/>
    <property type="evidence" value="ECO:0007669"/>
    <property type="project" value="TreeGrafter"/>
</dbReference>
<dbReference type="CDD" id="cd13912">
    <property type="entry name" value="CcO_II_C"/>
    <property type="match status" value="1"/>
</dbReference>
<dbReference type="FunFam" id="1.10.287.90:FF:000001">
    <property type="entry name" value="Cytochrome c oxidase subunit 2"/>
    <property type="match status" value="1"/>
</dbReference>
<dbReference type="FunFam" id="2.60.40.420:FF:000001">
    <property type="entry name" value="Cytochrome c oxidase subunit 2"/>
    <property type="match status" value="1"/>
</dbReference>
<dbReference type="Gene3D" id="1.10.287.90">
    <property type="match status" value="1"/>
</dbReference>
<dbReference type="Gene3D" id="2.60.40.420">
    <property type="entry name" value="Cupredoxins - blue copper proteins"/>
    <property type="match status" value="1"/>
</dbReference>
<dbReference type="InterPro" id="IPR045187">
    <property type="entry name" value="CcO_II"/>
</dbReference>
<dbReference type="InterPro" id="IPR002429">
    <property type="entry name" value="CcO_II-like_C"/>
</dbReference>
<dbReference type="InterPro" id="IPR034210">
    <property type="entry name" value="CcO_II_C"/>
</dbReference>
<dbReference type="InterPro" id="IPR001505">
    <property type="entry name" value="Copper_CuA"/>
</dbReference>
<dbReference type="InterPro" id="IPR008972">
    <property type="entry name" value="Cupredoxin"/>
</dbReference>
<dbReference type="InterPro" id="IPR014222">
    <property type="entry name" value="Cyt_c_oxidase_su2"/>
</dbReference>
<dbReference type="InterPro" id="IPR011759">
    <property type="entry name" value="Cyt_c_oxidase_su2_TM_dom"/>
</dbReference>
<dbReference type="InterPro" id="IPR036257">
    <property type="entry name" value="Cyt_c_oxidase_su2_TM_sf"/>
</dbReference>
<dbReference type="NCBIfam" id="TIGR02866">
    <property type="entry name" value="CoxB"/>
    <property type="match status" value="1"/>
</dbReference>
<dbReference type="PANTHER" id="PTHR22888:SF9">
    <property type="entry name" value="CYTOCHROME C OXIDASE SUBUNIT 2"/>
    <property type="match status" value="1"/>
</dbReference>
<dbReference type="PANTHER" id="PTHR22888">
    <property type="entry name" value="CYTOCHROME C OXIDASE, SUBUNIT II"/>
    <property type="match status" value="1"/>
</dbReference>
<dbReference type="Pfam" id="PF00116">
    <property type="entry name" value="COX2"/>
    <property type="match status" value="1"/>
</dbReference>
<dbReference type="Pfam" id="PF02790">
    <property type="entry name" value="COX2_TM"/>
    <property type="match status" value="1"/>
</dbReference>
<dbReference type="PRINTS" id="PR01166">
    <property type="entry name" value="CYCOXIDASEII"/>
</dbReference>
<dbReference type="SUPFAM" id="SSF49503">
    <property type="entry name" value="Cupredoxins"/>
    <property type="match status" value="1"/>
</dbReference>
<dbReference type="SUPFAM" id="SSF81464">
    <property type="entry name" value="Cytochrome c oxidase subunit II-like, transmembrane region"/>
    <property type="match status" value="1"/>
</dbReference>
<dbReference type="PROSITE" id="PS00078">
    <property type="entry name" value="COX2"/>
    <property type="match status" value="1"/>
</dbReference>
<dbReference type="PROSITE" id="PS50857">
    <property type="entry name" value="COX2_CUA"/>
    <property type="match status" value="1"/>
</dbReference>
<dbReference type="PROSITE" id="PS50999">
    <property type="entry name" value="COX2_TM"/>
    <property type="match status" value="1"/>
</dbReference>
<feature type="chain" id="PRO_0000254942" description="Cytochrome c oxidase subunit 2">
    <location>
        <begin position="1"/>
        <end position="227"/>
    </location>
</feature>
<feature type="topological domain" description="Mitochondrial intermembrane" evidence="3">
    <location>
        <begin position="1"/>
        <end position="14"/>
    </location>
</feature>
<feature type="transmembrane region" description="Helical; Name=I" evidence="3">
    <location>
        <begin position="15"/>
        <end position="45"/>
    </location>
</feature>
<feature type="topological domain" description="Mitochondrial matrix" evidence="3">
    <location>
        <begin position="46"/>
        <end position="59"/>
    </location>
</feature>
<feature type="transmembrane region" description="Helical; Name=II" evidence="3">
    <location>
        <begin position="60"/>
        <end position="87"/>
    </location>
</feature>
<feature type="topological domain" description="Mitochondrial intermembrane" evidence="3">
    <location>
        <begin position="88"/>
        <end position="227"/>
    </location>
</feature>
<feature type="binding site" evidence="3">
    <location>
        <position position="161"/>
    </location>
    <ligand>
        <name>Cu cation</name>
        <dbReference type="ChEBI" id="CHEBI:23378"/>
        <label>A1</label>
    </ligand>
</feature>
<feature type="binding site" evidence="3">
    <location>
        <position position="196"/>
    </location>
    <ligand>
        <name>Cu cation</name>
        <dbReference type="ChEBI" id="CHEBI:23378"/>
        <label>A1</label>
    </ligand>
</feature>
<feature type="binding site" evidence="3">
    <location>
        <position position="196"/>
    </location>
    <ligand>
        <name>Cu cation</name>
        <dbReference type="ChEBI" id="CHEBI:23378"/>
        <label>A2</label>
    </ligand>
</feature>
<feature type="binding site" evidence="3">
    <location>
        <position position="198"/>
    </location>
    <ligand>
        <name>Cu cation</name>
        <dbReference type="ChEBI" id="CHEBI:23378"/>
        <label>A2</label>
    </ligand>
</feature>
<feature type="binding site" evidence="3">
    <location>
        <position position="198"/>
    </location>
    <ligand>
        <name>Mg(2+)</name>
        <dbReference type="ChEBI" id="CHEBI:18420"/>
        <note>ligand shared with MT-CO1</note>
    </ligand>
</feature>
<feature type="binding site" evidence="3">
    <location>
        <position position="200"/>
    </location>
    <ligand>
        <name>Cu cation</name>
        <dbReference type="ChEBI" id="CHEBI:23378"/>
        <label>A1</label>
    </ligand>
</feature>
<feature type="binding site" evidence="3">
    <location>
        <position position="200"/>
    </location>
    <ligand>
        <name>Cu cation</name>
        <dbReference type="ChEBI" id="CHEBI:23378"/>
        <label>A2</label>
    </ligand>
</feature>
<feature type="binding site" evidence="3">
    <location>
        <position position="204"/>
    </location>
    <ligand>
        <name>Cu cation</name>
        <dbReference type="ChEBI" id="CHEBI:23378"/>
        <label>A2</label>
    </ligand>
</feature>
<feature type="binding site" evidence="3">
    <location>
        <position position="207"/>
    </location>
    <ligand>
        <name>Cu cation</name>
        <dbReference type="ChEBI" id="CHEBI:23378"/>
        <label>A1</label>
    </ligand>
</feature>
<comment type="function">
    <text evidence="2">Component of the cytochrome c oxidase, the last enzyme in the mitochondrial electron transport chain which drives oxidative phosphorylation. The respiratory chain contains 3 multisubunit complexes succinate dehydrogenase (complex II, CII), ubiquinol-cytochrome c oxidoreductase (cytochrome b-c1 complex, complex III, CIII) and cytochrome c oxidase (complex IV, CIV), that cooperate to transfer electrons derived from NADH and succinate to molecular oxygen, creating an electrochemical gradient over the inner membrane that drives transmembrane transport and the ATP synthase. Cytochrome c oxidase is the component of the respiratory chain that catalyzes the reduction of oxygen to water. Electrons originating from reduced cytochrome c in the intermembrane space (IMS) are transferred via the dinuclear copper A center (CU(A)) of subunit 2 and heme A of subunit 1 to the active site in subunit 1, a binuclear center (BNC) formed by heme A3 and copper B (CU(B)). The BNC reduces molecular oxygen to 2 water molecules using 4 electrons from cytochrome c in the IMS and 4 protons from the mitochondrial matrix.</text>
</comment>
<comment type="catalytic activity">
    <reaction evidence="2">
        <text>4 Fe(II)-[cytochrome c] + O2 + 8 H(+)(in) = 4 Fe(III)-[cytochrome c] + 2 H2O + 4 H(+)(out)</text>
        <dbReference type="Rhea" id="RHEA:11436"/>
        <dbReference type="Rhea" id="RHEA-COMP:10350"/>
        <dbReference type="Rhea" id="RHEA-COMP:14399"/>
        <dbReference type="ChEBI" id="CHEBI:15377"/>
        <dbReference type="ChEBI" id="CHEBI:15378"/>
        <dbReference type="ChEBI" id="CHEBI:15379"/>
        <dbReference type="ChEBI" id="CHEBI:29033"/>
        <dbReference type="ChEBI" id="CHEBI:29034"/>
        <dbReference type="EC" id="7.1.1.9"/>
    </reaction>
    <physiologicalReaction direction="left-to-right" evidence="2">
        <dbReference type="Rhea" id="RHEA:11437"/>
    </physiologicalReaction>
</comment>
<comment type="cofactor">
    <cofactor evidence="3">
        <name>Cu cation</name>
        <dbReference type="ChEBI" id="CHEBI:23378"/>
    </cofactor>
    <text evidence="3">Binds a dinuclear copper A center per subunit.</text>
</comment>
<comment type="subunit">
    <text evidence="1 3">Component of the cytochrome c oxidase (complex IV, CIV), a multisubunit enzyme composed of 14 subunits. The complex is composed of a catalytic core of 3 subunits MT-CO1, MT-CO2 and MT-CO3, encoded in the mitochondrial DNA, and 11 supernumerary subunits COX4I, COX5A, COX5B, COX6A, COX6B, COX6C, COX7A, COX7B, COX7C, COX8 and NDUFA4, which are encoded in the nuclear genome. The complex exists as a monomer or a dimer and forms supercomplexes (SCs) in the inner mitochondrial membrane with NADH-ubiquinone oxidoreductase (complex I, CI) and ubiquinol-cytochrome c oxidoreductase (cytochrome b-c1 complex, complex III, CIII), resulting in different assemblies (supercomplex SCI(1)III(2)IV(1) and megacomplex MCI(2)III(2)IV(2)) (By similarity). Found in a complex with TMEM177, COA6, COX18, COX20, SCO1 and SCO2. Interacts with TMEM177 in a COX20-dependent manner. Interacts with COX20. Interacts with COX16 (By similarity).</text>
</comment>
<comment type="subcellular location">
    <subcellularLocation>
        <location evidence="3">Mitochondrion inner membrane</location>
        <topology evidence="3">Multi-pass membrane protein</topology>
    </subcellularLocation>
</comment>
<comment type="similarity">
    <text evidence="4">Belongs to the cytochrome c oxidase subunit 2 family.</text>
</comment>
<name>COX2_NEOBL</name>
<geneLocation type="mitochondrion"/>
<gene>
    <name type="primary">MT-CO2</name>
    <name type="synonym">COII</name>
    <name type="synonym">COX2</name>
    <name type="synonym">COXII</name>
    <name type="synonym">MTCO2</name>
</gene>
<accession>Q7IZ16</accession>
<reference key="1">
    <citation type="journal article" date="2000" name="J. Mammal. Evol.">
        <title>Molecular phylogeny of the chipmunk genus Tamias based on the mitochondrial cytochrome oxidase subunit II gene.</title>
        <authorList>
            <person name="Piaggio A.J."/>
            <person name="Spicer G.S."/>
        </authorList>
    </citation>
    <scope>NUCLEOTIDE SEQUENCE [GENOMIC DNA]</scope>
</reference>
<evidence type="ECO:0000250" key="1">
    <source>
        <dbReference type="UniProtKB" id="P00403"/>
    </source>
</evidence>
<evidence type="ECO:0000250" key="2">
    <source>
        <dbReference type="UniProtKB" id="P00410"/>
    </source>
</evidence>
<evidence type="ECO:0000250" key="3">
    <source>
        <dbReference type="UniProtKB" id="P68530"/>
    </source>
</evidence>
<evidence type="ECO:0000305" key="4"/>
<protein>
    <recommendedName>
        <fullName>Cytochrome c oxidase subunit 2</fullName>
        <ecNumber>7.1.1.9</ecNumber>
    </recommendedName>
    <alternativeName>
        <fullName>Cytochrome c oxidase polypeptide II</fullName>
    </alternativeName>
</protein>
<proteinExistence type="inferred from homology"/>
<keyword id="KW-0186">Copper</keyword>
<keyword id="KW-0249">Electron transport</keyword>
<keyword id="KW-0460">Magnesium</keyword>
<keyword id="KW-0472">Membrane</keyword>
<keyword id="KW-0479">Metal-binding</keyword>
<keyword id="KW-0496">Mitochondrion</keyword>
<keyword id="KW-0999">Mitochondrion inner membrane</keyword>
<keyword id="KW-0679">Respiratory chain</keyword>
<keyword id="KW-1278">Translocase</keyword>
<keyword id="KW-0812">Transmembrane</keyword>
<keyword id="KW-1133">Transmembrane helix</keyword>
<keyword id="KW-0813">Transport</keyword>
<sequence length="227" mass="25947">MAYPFELGFQDATSPIMEELLHFHDHTLMIVFLISSLVLYIISLMLTTKLTHTSTMDAQEVETIWTILPAIILILIALPSLRILYMMDEINDPSLTVKTMGHQWYWSYEYTDYEDLNFDSYMIPTSDLSPGELRLLEVDNRVVLPMELPIRMLISSEDVLHSWAIPSLGLKTDAIPGRLNQATLTSTRPGLYYGQCSEICGSNHSFMPIVLELVPLKHFENWSSSML</sequence>
<organism>
    <name type="scientific">Neotamias bulleri</name>
    <name type="common">Buller's chipmunk</name>
    <name type="synonym">Tamias bulleri</name>
    <dbReference type="NCBI Taxonomy" id="3370375"/>
    <lineage>
        <taxon>Eukaryota</taxon>
        <taxon>Metazoa</taxon>
        <taxon>Chordata</taxon>
        <taxon>Craniata</taxon>
        <taxon>Vertebrata</taxon>
        <taxon>Euteleostomi</taxon>
        <taxon>Mammalia</taxon>
        <taxon>Eutheria</taxon>
        <taxon>Euarchontoglires</taxon>
        <taxon>Glires</taxon>
        <taxon>Rodentia</taxon>
        <taxon>Sciuromorpha</taxon>
        <taxon>Sciuridae</taxon>
        <taxon>Xerinae</taxon>
        <taxon>Marmotini</taxon>
        <taxon>Neotamias</taxon>
    </lineage>
</organism>